<name>RS13_CIOIN</name>
<dbReference type="EMBL" id="AJ297730">
    <property type="protein sequence ID" value="CAC82552.1"/>
    <property type="molecule type" value="mRNA"/>
</dbReference>
<dbReference type="RefSeq" id="NP_001027678.1">
    <property type="nucleotide sequence ID" value="NM_001032506.1"/>
</dbReference>
<dbReference type="FunCoup" id="Q8I7D6">
    <property type="interactions" value="553"/>
</dbReference>
<dbReference type="STRING" id="7719.ENSCINP00000033191"/>
<dbReference type="GeneID" id="445688"/>
<dbReference type="KEGG" id="cin:445688"/>
<dbReference type="CTD" id="6207"/>
<dbReference type="eggNOG" id="KOG0400">
    <property type="taxonomic scope" value="Eukaryota"/>
</dbReference>
<dbReference type="InParanoid" id="Q8I7D6"/>
<dbReference type="OrthoDB" id="623277at2759"/>
<dbReference type="Proteomes" id="UP000008144">
    <property type="component" value="Unplaced"/>
</dbReference>
<dbReference type="GO" id="GO:0022627">
    <property type="term" value="C:cytosolic small ribosomal subunit"/>
    <property type="evidence" value="ECO:0000318"/>
    <property type="project" value="GO_Central"/>
</dbReference>
<dbReference type="GO" id="GO:0005730">
    <property type="term" value="C:nucleolus"/>
    <property type="evidence" value="ECO:0000318"/>
    <property type="project" value="GO_Central"/>
</dbReference>
<dbReference type="GO" id="GO:0070181">
    <property type="term" value="F:small ribosomal subunit rRNA binding"/>
    <property type="evidence" value="ECO:0000318"/>
    <property type="project" value="GO_Central"/>
</dbReference>
<dbReference type="GO" id="GO:0003735">
    <property type="term" value="F:structural constituent of ribosome"/>
    <property type="evidence" value="ECO:0000318"/>
    <property type="project" value="GO_Central"/>
</dbReference>
<dbReference type="GO" id="GO:0006412">
    <property type="term" value="P:translation"/>
    <property type="evidence" value="ECO:0007669"/>
    <property type="project" value="InterPro"/>
</dbReference>
<dbReference type="CDD" id="cd00353">
    <property type="entry name" value="Ribosomal_S15p_S13e"/>
    <property type="match status" value="1"/>
</dbReference>
<dbReference type="FunFam" id="1.10.287.10:FF:000003">
    <property type="entry name" value="40S ribosomal protein S13"/>
    <property type="match status" value="1"/>
</dbReference>
<dbReference type="FunFam" id="4.10.860.130:FF:000001">
    <property type="entry name" value="40S ribosomal protein S13"/>
    <property type="match status" value="1"/>
</dbReference>
<dbReference type="Gene3D" id="4.10.860.130">
    <property type="match status" value="1"/>
</dbReference>
<dbReference type="Gene3D" id="1.10.287.10">
    <property type="entry name" value="S15/NS1, RNA-binding"/>
    <property type="match status" value="1"/>
</dbReference>
<dbReference type="HAMAP" id="MF_01343_A">
    <property type="entry name" value="Ribosomal_uS15_A"/>
    <property type="match status" value="1"/>
</dbReference>
<dbReference type="InterPro" id="IPR000589">
    <property type="entry name" value="Ribosomal_uS15"/>
</dbReference>
<dbReference type="InterPro" id="IPR023029">
    <property type="entry name" value="Ribosomal_uS15_arc_euk"/>
</dbReference>
<dbReference type="InterPro" id="IPR012606">
    <property type="entry name" value="Ribosomal_uS15_N"/>
</dbReference>
<dbReference type="InterPro" id="IPR009068">
    <property type="entry name" value="uS15_NS1_RNA-bd_sf"/>
</dbReference>
<dbReference type="NCBIfam" id="NF006331">
    <property type="entry name" value="PRK08561.1"/>
    <property type="match status" value="1"/>
</dbReference>
<dbReference type="PANTHER" id="PTHR11885">
    <property type="entry name" value="RIBOSOMAL PROTEIN S15P/S13E"/>
    <property type="match status" value="1"/>
</dbReference>
<dbReference type="PANTHER" id="PTHR11885:SF6">
    <property type="entry name" value="SMALL RIBOSOMAL SUBUNIT PROTEIN US15"/>
    <property type="match status" value="1"/>
</dbReference>
<dbReference type="Pfam" id="PF08069">
    <property type="entry name" value="Ribosomal_S13_N"/>
    <property type="match status" value="1"/>
</dbReference>
<dbReference type="Pfam" id="PF00312">
    <property type="entry name" value="Ribosomal_S15"/>
    <property type="match status" value="1"/>
</dbReference>
<dbReference type="SMART" id="SM01386">
    <property type="entry name" value="Ribosomal_S13_N"/>
    <property type="match status" value="1"/>
</dbReference>
<dbReference type="SMART" id="SM01387">
    <property type="entry name" value="Ribosomal_S15"/>
    <property type="match status" value="1"/>
</dbReference>
<dbReference type="SUPFAM" id="SSF47060">
    <property type="entry name" value="S15/NS1 RNA-binding domain"/>
    <property type="match status" value="1"/>
</dbReference>
<dbReference type="PROSITE" id="PS00362">
    <property type="entry name" value="RIBOSOMAL_S15"/>
    <property type="match status" value="1"/>
</dbReference>
<feature type="initiator methionine" description="Removed" evidence="1">
    <location>
        <position position="1"/>
    </location>
</feature>
<feature type="chain" id="PRO_0000115669" description="Small ribosomal subunit protein uS15">
    <location>
        <begin position="2"/>
        <end position="151"/>
    </location>
</feature>
<organism>
    <name type="scientific">Ciona intestinalis</name>
    <name type="common">Transparent sea squirt</name>
    <name type="synonym">Ascidia intestinalis</name>
    <dbReference type="NCBI Taxonomy" id="7719"/>
    <lineage>
        <taxon>Eukaryota</taxon>
        <taxon>Metazoa</taxon>
        <taxon>Chordata</taxon>
        <taxon>Tunicata</taxon>
        <taxon>Ascidiacea</taxon>
        <taxon>Phlebobranchia</taxon>
        <taxon>Cionidae</taxon>
        <taxon>Ciona</taxon>
    </lineage>
</organism>
<gene>
    <name type="primary">RPS13</name>
</gene>
<sequence length="151" mass="17096">MGRMHAPGKGLSSSALPYRRSVPTWLKLSSEDVKEQIYKLAKKGLRPSQIGVILRDSHGXAQVRFVTGNQILRVLKAKGLAPDLPEDIYHLIKKAVAMRKHLERNRKDTDSKFRLILVESRIHRLGRYYKTKGVLPPNWKYESATASALVA</sequence>
<protein>
    <recommendedName>
        <fullName evidence="2">Small ribosomal subunit protein uS15</fullName>
    </recommendedName>
    <alternativeName>
        <fullName>40S ribosomal protein S13</fullName>
    </alternativeName>
</protein>
<keyword id="KW-1185">Reference proteome</keyword>
<keyword id="KW-0687">Ribonucleoprotein</keyword>
<keyword id="KW-0689">Ribosomal protein</keyword>
<proteinExistence type="evidence at transcript level"/>
<comment type="similarity">
    <text evidence="2">Belongs to the universal ribosomal protein uS15 family.</text>
</comment>
<reference key="1">
    <citation type="submission" date="2000-10" db="EMBL/GenBank/DDBJ databases">
        <title>Some full length of Ciona intestinalis.</title>
        <authorList>
            <person name="Ievolella C."/>
            <person name="Valle G."/>
        </authorList>
    </citation>
    <scope>NUCLEOTIDE SEQUENCE [MRNA]</scope>
</reference>
<accession>Q8I7D6</accession>
<evidence type="ECO:0000250" key="1"/>
<evidence type="ECO:0000305" key="2"/>